<gene>
    <name type="primary">Krtap19-3</name>
    <name type="synonym">Krtap16-5</name>
    <name evidence="8" type="synonym">Krtap16.5</name>
</gene>
<keyword id="KW-0416">Keratin</keyword>
<keyword id="KW-1185">Reference proteome</keyword>
<keyword id="KW-0677">Repeat</keyword>
<evidence type="ECO:0000250" key="1"/>
<evidence type="ECO:0000255" key="2"/>
<evidence type="ECO:0000269" key="3">
    <source>
    </source>
</evidence>
<evidence type="ECO:0000269" key="4">
    <source>
    </source>
</evidence>
<evidence type="ECO:0000269" key="5">
    <source>
    </source>
</evidence>
<evidence type="ECO:0000305" key="6"/>
<evidence type="ECO:0000312" key="7">
    <source>
        <dbReference type="EMBL" id="AAI15547.1"/>
    </source>
</evidence>
<evidence type="ECO:0000312" key="8">
    <source>
        <dbReference type="EMBL" id="AAK52893.1"/>
    </source>
</evidence>
<evidence type="ECO:0000312" key="9">
    <source>
        <dbReference type="EMBL" id="BAC25638.1"/>
    </source>
</evidence>
<proteinExistence type="evidence at transcript level"/>
<sequence>MSHYSSYYGGLGYGYGSFGGPGCGCNSIRRLVGFGSGYGGFGYGSGFGGFGYGSGYGGYGYGSGFRGYGCGCRRPSCCGGYGFSSFY</sequence>
<organism>
    <name type="scientific">Mus musculus</name>
    <name type="common">Mouse</name>
    <dbReference type="NCBI Taxonomy" id="10090"/>
    <lineage>
        <taxon>Eukaryota</taxon>
        <taxon>Metazoa</taxon>
        <taxon>Chordata</taxon>
        <taxon>Craniata</taxon>
        <taxon>Vertebrata</taxon>
        <taxon>Euteleostomi</taxon>
        <taxon>Mammalia</taxon>
        <taxon>Eutheria</taxon>
        <taxon>Euarchontoglires</taxon>
        <taxon>Glires</taxon>
        <taxon>Rodentia</taxon>
        <taxon>Myomorpha</taxon>
        <taxon>Muroidea</taxon>
        <taxon>Muridae</taxon>
        <taxon>Murinae</taxon>
        <taxon>Mus</taxon>
        <taxon>Mus</taxon>
    </lineage>
</organism>
<dbReference type="EMBL" id="AF345295">
    <property type="protein sequence ID" value="AAK52893.1"/>
    <property type="molecule type" value="mRNA"/>
</dbReference>
<dbReference type="EMBL" id="AK020697">
    <property type="protein sequence ID" value="BAC25638.1"/>
    <property type="molecule type" value="mRNA"/>
</dbReference>
<dbReference type="EMBL" id="BC115545">
    <property type="protein sequence ID" value="AAI15546.1"/>
    <property type="molecule type" value="mRNA"/>
</dbReference>
<dbReference type="EMBL" id="BC115546">
    <property type="protein sequence ID" value="AAI15547.1"/>
    <property type="molecule type" value="mRNA"/>
</dbReference>
<dbReference type="CCDS" id="CCDS49895.1"/>
<dbReference type="RefSeq" id="NP_570927.1">
    <property type="nucleotide sequence ID" value="NM_130857.2"/>
</dbReference>
<dbReference type="FunCoup" id="Q925H6">
    <property type="interactions" value="53"/>
</dbReference>
<dbReference type="STRING" id="10090.ENSMUSP00000133176"/>
<dbReference type="PaxDb" id="10090-ENSMUSP00000133176"/>
<dbReference type="ProteomicsDB" id="263454"/>
<dbReference type="DNASU" id="77918"/>
<dbReference type="Ensembl" id="ENSMUST00000075284.4">
    <property type="protein sequence ID" value="ENSMUSP00000133176.2"/>
    <property type="gene ID" value="ENSMUSG00000060469.4"/>
</dbReference>
<dbReference type="GeneID" id="77918"/>
<dbReference type="KEGG" id="mmu:77918"/>
<dbReference type="UCSC" id="uc007zvj.1">
    <property type="organism name" value="mouse"/>
</dbReference>
<dbReference type="AGR" id="MGI:1925168"/>
<dbReference type="CTD" id="337970"/>
<dbReference type="MGI" id="MGI:1925168">
    <property type="gene designation" value="Krtap19-3"/>
</dbReference>
<dbReference type="VEuPathDB" id="HostDB:ENSMUSG00000060469"/>
<dbReference type="GeneTree" id="ENSGT00950000183836"/>
<dbReference type="HOGENOM" id="CLU_184630_0_0_1"/>
<dbReference type="InParanoid" id="Q925H6"/>
<dbReference type="OMA" id="YGCSSIH"/>
<dbReference type="Reactome" id="R-MMU-6805567">
    <property type="pathway name" value="Keratinization"/>
</dbReference>
<dbReference type="BioGRID-ORCS" id="77918">
    <property type="hits" value="4 hits in 72 CRISPR screens"/>
</dbReference>
<dbReference type="PRO" id="PR:Q925H6"/>
<dbReference type="Proteomes" id="UP000000589">
    <property type="component" value="Chromosome 16"/>
</dbReference>
<dbReference type="RNAct" id="Q925H6">
    <property type="molecule type" value="protein"/>
</dbReference>
<dbReference type="Bgee" id="ENSMUSG00000060469">
    <property type="expression patterns" value="Expressed in lip and 10 other cell types or tissues"/>
</dbReference>
<dbReference type="GO" id="GO:0005829">
    <property type="term" value="C:cytosol"/>
    <property type="evidence" value="ECO:0007669"/>
    <property type="project" value="UniProtKB-ARBA"/>
</dbReference>
<dbReference type="GO" id="GO:0005882">
    <property type="term" value="C:intermediate filament"/>
    <property type="evidence" value="ECO:0007669"/>
    <property type="project" value="UniProtKB-KW"/>
</dbReference>
<dbReference type="InterPro" id="IPR021743">
    <property type="entry name" value="KRTAP_type8/19/20/21/22"/>
</dbReference>
<dbReference type="InterPro" id="IPR051528">
    <property type="entry name" value="KRTAP_type_19"/>
</dbReference>
<dbReference type="PANTHER" id="PTHR38140">
    <property type="entry name" value="KERATIN-ASSOCIATED PROTEIN 19-3-RELATED"/>
    <property type="match status" value="1"/>
</dbReference>
<dbReference type="PANTHER" id="PTHR38140:SF5">
    <property type="entry name" value="KERATIN-ASSOCIATED PROTEIN 19-4-RELATED"/>
    <property type="match status" value="1"/>
</dbReference>
<dbReference type="Pfam" id="PF11759">
    <property type="entry name" value="KRTAP"/>
    <property type="match status" value="1"/>
</dbReference>
<comment type="function">
    <text evidence="6">In the hair cortex, hair keratin intermediate filaments are embedded in an interfilamentous matrix, consisting of hair keratin-associated proteins (KRTAP), which are essential for the formation of a rigid and resistant hair shaft through their extensive disulfide bond cross-linking with abundant cysteine residues of hair keratins. The matrix proteins include the high-sulfur and high-glycine-tyrosine keratins.</text>
</comment>
<comment type="subunit">
    <text evidence="1">Interacts with hair keratins.</text>
</comment>
<comment type="tissue specificity">
    <text evidence="4">Strong expression in narrowly defined pattern restricted to the lower and middle cortical regions of the hair shaft in both developing and cycling hair. During hair follicle regression (catagen), expression levels decrease until expression is no longer detectable in follicles at resting stage (telogen).</text>
</comment>
<comment type="induction">
    <text evidence="3 4 5">Expression in skin and hair follicle is regulated by HOXC13 and by GATA3.</text>
</comment>
<comment type="similarity">
    <text evidence="6">Belongs to the KRTAP type 19 family.</text>
</comment>
<feature type="chain" id="PRO_0000356215" description="Keratin-associated protein 19-3">
    <location>
        <begin position="1"/>
        <end position="87"/>
    </location>
</feature>
<feature type="region of interest" description="23 X 2 AA repeats of G-[YCGS]" evidence="2">
    <location>
        <begin position="9"/>
        <end position="82"/>
    </location>
</feature>
<reference evidence="6 8" key="1">
    <citation type="journal article" date="2001" name="Development">
        <title>Overexpression of Hoxc13 in differentiating keratinocytes results in downregulation of a novel hair keratin gene cluster and alopecia.</title>
        <authorList>
            <person name="Tkatchenko A.V."/>
            <person name="Visconti R.P."/>
            <person name="Shang L."/>
            <person name="Papenbrock T."/>
            <person name="Pruett N.D."/>
            <person name="Ito T."/>
            <person name="Ogawa M."/>
            <person name="Awgulewitsch A."/>
        </authorList>
    </citation>
    <scope>NUCLEOTIDE SEQUENCE [MRNA]</scope>
    <scope>INDUCTION</scope>
    <source>
        <strain evidence="8">FVB/NJ</strain>
        <tissue>Skin</tissue>
    </source>
</reference>
<reference evidence="9" key="2">
    <citation type="journal article" date="2005" name="Science">
        <title>The transcriptional landscape of the mammalian genome.</title>
        <authorList>
            <person name="Carninci P."/>
            <person name="Kasukawa T."/>
            <person name="Katayama S."/>
            <person name="Gough J."/>
            <person name="Frith M.C."/>
            <person name="Maeda N."/>
            <person name="Oyama R."/>
            <person name="Ravasi T."/>
            <person name="Lenhard B."/>
            <person name="Wells C."/>
            <person name="Kodzius R."/>
            <person name="Shimokawa K."/>
            <person name="Bajic V.B."/>
            <person name="Brenner S.E."/>
            <person name="Batalov S."/>
            <person name="Forrest A.R."/>
            <person name="Zavolan M."/>
            <person name="Davis M.J."/>
            <person name="Wilming L.G."/>
            <person name="Aidinis V."/>
            <person name="Allen J.E."/>
            <person name="Ambesi-Impiombato A."/>
            <person name="Apweiler R."/>
            <person name="Aturaliya R.N."/>
            <person name="Bailey T.L."/>
            <person name="Bansal M."/>
            <person name="Baxter L."/>
            <person name="Beisel K.W."/>
            <person name="Bersano T."/>
            <person name="Bono H."/>
            <person name="Chalk A.M."/>
            <person name="Chiu K.P."/>
            <person name="Choudhary V."/>
            <person name="Christoffels A."/>
            <person name="Clutterbuck D.R."/>
            <person name="Crowe M.L."/>
            <person name="Dalla E."/>
            <person name="Dalrymple B.P."/>
            <person name="de Bono B."/>
            <person name="Della Gatta G."/>
            <person name="di Bernardo D."/>
            <person name="Down T."/>
            <person name="Engstrom P."/>
            <person name="Fagiolini M."/>
            <person name="Faulkner G."/>
            <person name="Fletcher C.F."/>
            <person name="Fukushima T."/>
            <person name="Furuno M."/>
            <person name="Futaki S."/>
            <person name="Gariboldi M."/>
            <person name="Georgii-Hemming P."/>
            <person name="Gingeras T.R."/>
            <person name="Gojobori T."/>
            <person name="Green R.E."/>
            <person name="Gustincich S."/>
            <person name="Harbers M."/>
            <person name="Hayashi Y."/>
            <person name="Hensch T.K."/>
            <person name="Hirokawa N."/>
            <person name="Hill D."/>
            <person name="Huminiecki L."/>
            <person name="Iacono M."/>
            <person name="Ikeo K."/>
            <person name="Iwama A."/>
            <person name="Ishikawa T."/>
            <person name="Jakt M."/>
            <person name="Kanapin A."/>
            <person name="Katoh M."/>
            <person name="Kawasawa Y."/>
            <person name="Kelso J."/>
            <person name="Kitamura H."/>
            <person name="Kitano H."/>
            <person name="Kollias G."/>
            <person name="Krishnan S.P."/>
            <person name="Kruger A."/>
            <person name="Kummerfeld S.K."/>
            <person name="Kurochkin I.V."/>
            <person name="Lareau L.F."/>
            <person name="Lazarevic D."/>
            <person name="Lipovich L."/>
            <person name="Liu J."/>
            <person name="Liuni S."/>
            <person name="McWilliam S."/>
            <person name="Madan Babu M."/>
            <person name="Madera M."/>
            <person name="Marchionni L."/>
            <person name="Matsuda H."/>
            <person name="Matsuzawa S."/>
            <person name="Miki H."/>
            <person name="Mignone F."/>
            <person name="Miyake S."/>
            <person name="Morris K."/>
            <person name="Mottagui-Tabar S."/>
            <person name="Mulder N."/>
            <person name="Nakano N."/>
            <person name="Nakauchi H."/>
            <person name="Ng P."/>
            <person name="Nilsson R."/>
            <person name="Nishiguchi S."/>
            <person name="Nishikawa S."/>
            <person name="Nori F."/>
            <person name="Ohara O."/>
            <person name="Okazaki Y."/>
            <person name="Orlando V."/>
            <person name="Pang K.C."/>
            <person name="Pavan W.J."/>
            <person name="Pavesi G."/>
            <person name="Pesole G."/>
            <person name="Petrovsky N."/>
            <person name="Piazza S."/>
            <person name="Reed J."/>
            <person name="Reid J.F."/>
            <person name="Ring B.Z."/>
            <person name="Ringwald M."/>
            <person name="Rost B."/>
            <person name="Ruan Y."/>
            <person name="Salzberg S.L."/>
            <person name="Sandelin A."/>
            <person name="Schneider C."/>
            <person name="Schoenbach C."/>
            <person name="Sekiguchi K."/>
            <person name="Semple C.A."/>
            <person name="Seno S."/>
            <person name="Sessa L."/>
            <person name="Sheng Y."/>
            <person name="Shibata Y."/>
            <person name="Shimada H."/>
            <person name="Shimada K."/>
            <person name="Silva D."/>
            <person name="Sinclair B."/>
            <person name="Sperling S."/>
            <person name="Stupka E."/>
            <person name="Sugiura K."/>
            <person name="Sultana R."/>
            <person name="Takenaka Y."/>
            <person name="Taki K."/>
            <person name="Tammoja K."/>
            <person name="Tan S.L."/>
            <person name="Tang S."/>
            <person name="Taylor M.S."/>
            <person name="Tegner J."/>
            <person name="Teichmann S.A."/>
            <person name="Ueda H.R."/>
            <person name="van Nimwegen E."/>
            <person name="Verardo R."/>
            <person name="Wei C.L."/>
            <person name="Yagi K."/>
            <person name="Yamanishi H."/>
            <person name="Zabarovsky E."/>
            <person name="Zhu S."/>
            <person name="Zimmer A."/>
            <person name="Hide W."/>
            <person name="Bult C."/>
            <person name="Grimmond S.M."/>
            <person name="Teasdale R.D."/>
            <person name="Liu E.T."/>
            <person name="Brusic V."/>
            <person name="Quackenbush J."/>
            <person name="Wahlestedt C."/>
            <person name="Mattick J.S."/>
            <person name="Hume D.A."/>
            <person name="Kai C."/>
            <person name="Sasaki D."/>
            <person name="Tomaru Y."/>
            <person name="Fukuda S."/>
            <person name="Kanamori-Katayama M."/>
            <person name="Suzuki M."/>
            <person name="Aoki J."/>
            <person name="Arakawa T."/>
            <person name="Iida J."/>
            <person name="Imamura K."/>
            <person name="Itoh M."/>
            <person name="Kato T."/>
            <person name="Kawaji H."/>
            <person name="Kawagashira N."/>
            <person name="Kawashima T."/>
            <person name="Kojima M."/>
            <person name="Kondo S."/>
            <person name="Konno H."/>
            <person name="Nakano K."/>
            <person name="Ninomiya N."/>
            <person name="Nishio T."/>
            <person name="Okada M."/>
            <person name="Plessy C."/>
            <person name="Shibata K."/>
            <person name="Shiraki T."/>
            <person name="Suzuki S."/>
            <person name="Tagami M."/>
            <person name="Waki K."/>
            <person name="Watahiki A."/>
            <person name="Okamura-Oho Y."/>
            <person name="Suzuki H."/>
            <person name="Kawai J."/>
            <person name="Hayashizaki Y."/>
        </authorList>
    </citation>
    <scope>NUCLEOTIDE SEQUENCE [LARGE SCALE MRNA]</scope>
    <source>
        <strain evidence="9">C57BL/6J</strain>
        <tissue evidence="9">Skin</tissue>
    </source>
</reference>
<reference evidence="7" key="3">
    <citation type="journal article" date="2004" name="Genome Res.">
        <title>The status, quality, and expansion of the NIH full-length cDNA project: the Mammalian Gene Collection (MGC).</title>
        <authorList>
            <consortium name="The MGC Project Team"/>
        </authorList>
    </citation>
    <scope>NUCLEOTIDE SEQUENCE [LARGE SCALE MRNA]</scope>
</reference>
<reference evidence="6" key="4">
    <citation type="journal article" date="2004" name="J. Biol. Chem.">
        <title>Krtap16, characterization of a new hair keratin-associated protein (KAP) gene complex on mouse chromosome 16 and evidence for regulation by Hoxc13.</title>
        <authorList>
            <person name="Pruett N.D."/>
            <person name="Tkatchenko T.V."/>
            <person name="Jave-Suarez L."/>
            <person name="Jacobs D.F."/>
            <person name="Potter C.S."/>
            <person name="Tkatchenko A.V."/>
            <person name="Schweizer J."/>
            <person name="Awgulewitsch A."/>
        </authorList>
    </citation>
    <scope>TISSUE SPECIFICITY</scope>
    <scope>INDUCTION</scope>
</reference>
<reference evidence="6" key="5">
    <citation type="journal article" date="2007" name="Development">
        <title>Transcriptome and phenotypic analysis reveals Gata3-dependent signalling pathways in murine hair follicles.</title>
        <authorList>
            <person name="Kurek D."/>
            <person name="Garinis G.A."/>
            <person name="van Doorninck J.H."/>
            <person name="van der Wees J."/>
            <person name="Grosveld F.G."/>
        </authorList>
    </citation>
    <scope>INDUCTION</scope>
</reference>
<name>KR193_MOUSE</name>
<accession>Q925H6</accession>
<protein>
    <recommendedName>
        <fullName>Keratin-associated protein 19-3</fullName>
    </recommendedName>
    <alternativeName>
        <fullName evidence="7">Keratin-associated protein 16-5</fullName>
    </alternativeName>
    <alternativeName>
        <fullName evidence="8">Keratin-associated protein 16.5</fullName>
    </alternativeName>
</protein>